<reference key="1">
    <citation type="journal article" date="2005" name="Genome Res.">
        <title>Coping with cold: the genome of the versatile marine Antarctica bacterium Pseudoalteromonas haloplanktis TAC125.</title>
        <authorList>
            <person name="Medigue C."/>
            <person name="Krin E."/>
            <person name="Pascal G."/>
            <person name="Barbe V."/>
            <person name="Bernsel A."/>
            <person name="Bertin P.N."/>
            <person name="Cheung F."/>
            <person name="Cruveiller S."/>
            <person name="D'Amico S."/>
            <person name="Duilio A."/>
            <person name="Fang G."/>
            <person name="Feller G."/>
            <person name="Ho C."/>
            <person name="Mangenot S."/>
            <person name="Marino G."/>
            <person name="Nilsson J."/>
            <person name="Parrilli E."/>
            <person name="Rocha E.P.C."/>
            <person name="Rouy Z."/>
            <person name="Sekowska A."/>
            <person name="Tutino M.L."/>
            <person name="Vallenet D."/>
            <person name="von Heijne G."/>
            <person name="Danchin A."/>
        </authorList>
    </citation>
    <scope>NUCLEOTIDE SEQUENCE [LARGE SCALE GENOMIC DNA]</scope>
    <source>
        <strain>TAC 125</strain>
    </source>
</reference>
<sequence length="188" mass="20566">MANYSTNEFKGGLKIMMDGEPSSIIENEMVKPGKGQAFNRVRIRKLISGKVLEKTFKSGESVEGADVMDTDLAYLYTDGEFWHFMNNETFEQIAADEKALGDAGKWLVENDVCTITLWNGNPIVVTPPNFVELEITETDPGLKGDTAGTGGKPATLSTGAVVRVPLFVQIGEVIKVDTRNGEYVSRVK</sequence>
<dbReference type="EMBL" id="CR954246">
    <property type="protein sequence ID" value="CAI85571.1"/>
    <property type="molecule type" value="Genomic_DNA"/>
</dbReference>
<dbReference type="SMR" id="Q3IFP5"/>
<dbReference type="STRING" id="326442.PSHAa0474"/>
<dbReference type="KEGG" id="pha:PSHAa0474"/>
<dbReference type="PATRIC" id="fig|326442.8.peg.451"/>
<dbReference type="eggNOG" id="COG0231">
    <property type="taxonomic scope" value="Bacteria"/>
</dbReference>
<dbReference type="HOGENOM" id="CLU_074944_0_0_6"/>
<dbReference type="BioCyc" id="PHAL326442:PSHA_RS02300-MONOMER"/>
<dbReference type="UniPathway" id="UPA00345"/>
<dbReference type="Proteomes" id="UP000006843">
    <property type="component" value="Chromosome I"/>
</dbReference>
<dbReference type="GO" id="GO:0005737">
    <property type="term" value="C:cytoplasm"/>
    <property type="evidence" value="ECO:0007669"/>
    <property type="project" value="UniProtKB-SubCell"/>
</dbReference>
<dbReference type="GO" id="GO:0003746">
    <property type="term" value="F:translation elongation factor activity"/>
    <property type="evidence" value="ECO:0007669"/>
    <property type="project" value="UniProtKB-UniRule"/>
</dbReference>
<dbReference type="GO" id="GO:0043043">
    <property type="term" value="P:peptide biosynthetic process"/>
    <property type="evidence" value="ECO:0007669"/>
    <property type="project" value="InterPro"/>
</dbReference>
<dbReference type="CDD" id="cd04470">
    <property type="entry name" value="S1_EF-P_repeat_1"/>
    <property type="match status" value="1"/>
</dbReference>
<dbReference type="CDD" id="cd05794">
    <property type="entry name" value="S1_EF-P_repeat_2"/>
    <property type="match status" value="1"/>
</dbReference>
<dbReference type="FunFam" id="2.30.30.30:FF:000003">
    <property type="entry name" value="Elongation factor P"/>
    <property type="match status" value="1"/>
</dbReference>
<dbReference type="FunFam" id="2.40.50.140:FF:000004">
    <property type="entry name" value="Elongation factor P"/>
    <property type="match status" value="1"/>
</dbReference>
<dbReference type="FunFam" id="2.40.50.140:FF:000009">
    <property type="entry name" value="Elongation factor P"/>
    <property type="match status" value="1"/>
</dbReference>
<dbReference type="Gene3D" id="2.30.30.30">
    <property type="match status" value="1"/>
</dbReference>
<dbReference type="Gene3D" id="2.40.50.140">
    <property type="entry name" value="Nucleic acid-binding proteins"/>
    <property type="match status" value="2"/>
</dbReference>
<dbReference type="HAMAP" id="MF_00141">
    <property type="entry name" value="EF_P"/>
    <property type="match status" value="1"/>
</dbReference>
<dbReference type="InterPro" id="IPR015365">
    <property type="entry name" value="Elong-fact-P_C"/>
</dbReference>
<dbReference type="InterPro" id="IPR012340">
    <property type="entry name" value="NA-bd_OB-fold"/>
</dbReference>
<dbReference type="InterPro" id="IPR014722">
    <property type="entry name" value="Rib_uL2_dom2"/>
</dbReference>
<dbReference type="InterPro" id="IPR020599">
    <property type="entry name" value="Transl_elong_fac_P/YeiP"/>
</dbReference>
<dbReference type="InterPro" id="IPR013185">
    <property type="entry name" value="Transl_elong_KOW-like"/>
</dbReference>
<dbReference type="InterPro" id="IPR001059">
    <property type="entry name" value="Transl_elong_P/YeiP_cen"/>
</dbReference>
<dbReference type="InterPro" id="IPR013852">
    <property type="entry name" value="Transl_elong_P/YeiP_CS"/>
</dbReference>
<dbReference type="InterPro" id="IPR011768">
    <property type="entry name" value="Transl_elongation_fac_P"/>
</dbReference>
<dbReference type="InterPro" id="IPR008991">
    <property type="entry name" value="Translation_prot_SH3-like_sf"/>
</dbReference>
<dbReference type="NCBIfam" id="TIGR00038">
    <property type="entry name" value="efp"/>
    <property type="match status" value="1"/>
</dbReference>
<dbReference type="NCBIfam" id="NF001810">
    <property type="entry name" value="PRK00529.1"/>
    <property type="match status" value="1"/>
</dbReference>
<dbReference type="PANTHER" id="PTHR30053">
    <property type="entry name" value="ELONGATION FACTOR P"/>
    <property type="match status" value="1"/>
</dbReference>
<dbReference type="PANTHER" id="PTHR30053:SF12">
    <property type="entry name" value="ELONGATION FACTOR P (EF-P) FAMILY PROTEIN"/>
    <property type="match status" value="1"/>
</dbReference>
<dbReference type="Pfam" id="PF01132">
    <property type="entry name" value="EFP"/>
    <property type="match status" value="1"/>
</dbReference>
<dbReference type="Pfam" id="PF08207">
    <property type="entry name" value="EFP_N"/>
    <property type="match status" value="1"/>
</dbReference>
<dbReference type="Pfam" id="PF09285">
    <property type="entry name" value="Elong-fact-P_C"/>
    <property type="match status" value="1"/>
</dbReference>
<dbReference type="PIRSF" id="PIRSF005901">
    <property type="entry name" value="EF-P"/>
    <property type="match status" value="1"/>
</dbReference>
<dbReference type="SMART" id="SM01185">
    <property type="entry name" value="EFP"/>
    <property type="match status" value="1"/>
</dbReference>
<dbReference type="SMART" id="SM00841">
    <property type="entry name" value="Elong-fact-P_C"/>
    <property type="match status" value="1"/>
</dbReference>
<dbReference type="SUPFAM" id="SSF50249">
    <property type="entry name" value="Nucleic acid-binding proteins"/>
    <property type="match status" value="2"/>
</dbReference>
<dbReference type="SUPFAM" id="SSF50104">
    <property type="entry name" value="Translation proteins SH3-like domain"/>
    <property type="match status" value="1"/>
</dbReference>
<dbReference type="PROSITE" id="PS01275">
    <property type="entry name" value="EFP"/>
    <property type="match status" value="1"/>
</dbReference>
<evidence type="ECO:0000255" key="1">
    <source>
        <dbReference type="HAMAP-Rule" id="MF_00141"/>
    </source>
</evidence>
<accession>Q3IFP5</accession>
<protein>
    <recommendedName>
        <fullName evidence="1">Elongation factor P</fullName>
        <shortName evidence="1">EF-P</shortName>
    </recommendedName>
</protein>
<name>EFP_PSET1</name>
<keyword id="KW-0963">Cytoplasm</keyword>
<keyword id="KW-0251">Elongation factor</keyword>
<keyword id="KW-0379">Hydroxylation</keyword>
<keyword id="KW-0648">Protein biosynthesis</keyword>
<keyword id="KW-1185">Reference proteome</keyword>
<gene>
    <name evidence="1" type="primary">efp</name>
    <name type="ordered locus">PSHAa0474</name>
</gene>
<proteinExistence type="inferred from homology"/>
<comment type="function">
    <text evidence="1">Involved in peptide bond synthesis. Alleviates ribosome stalling that occurs when 3 or more consecutive Pro residues or the sequence PPG is present in a protein, possibly by augmenting the peptidyl transferase activity of the ribosome. Modification of Lys-34 is required for alleviation.</text>
</comment>
<comment type="pathway">
    <text evidence="1">Protein biosynthesis; polypeptide chain elongation.</text>
</comment>
<comment type="subcellular location">
    <subcellularLocation>
        <location evidence="1">Cytoplasm</location>
    </subcellularLocation>
</comment>
<comment type="PTM">
    <text evidence="1">May be beta-lysylated on the epsilon-amino group of Lys-34 by the combined action of EpmA and EpmB, and then hydroxylated on the C5 position of the same residue by EpmC (if this protein is present). Lysylation is critical for the stimulatory effect of EF-P on peptide-bond formation. The lysylation moiety may extend toward the peptidyltransferase center and stabilize the terminal 3-CCA end of the tRNA. Hydroxylation of the C5 position on Lys-34 may allow additional potential stabilizing hydrogen-bond interactions with the P-tRNA.</text>
</comment>
<comment type="similarity">
    <text evidence="1">Belongs to the elongation factor P family.</text>
</comment>
<feature type="chain" id="PRO_1000010815" description="Elongation factor P">
    <location>
        <begin position="1"/>
        <end position="188"/>
    </location>
</feature>
<feature type="modified residue" description="N6-(3,6-diaminohexanoyl)-5-hydroxylysine" evidence="1">
    <location>
        <position position="34"/>
    </location>
</feature>
<organism>
    <name type="scientific">Pseudoalteromonas translucida (strain TAC 125)</name>
    <dbReference type="NCBI Taxonomy" id="326442"/>
    <lineage>
        <taxon>Bacteria</taxon>
        <taxon>Pseudomonadati</taxon>
        <taxon>Pseudomonadota</taxon>
        <taxon>Gammaproteobacteria</taxon>
        <taxon>Alteromonadales</taxon>
        <taxon>Pseudoalteromonadaceae</taxon>
        <taxon>Pseudoalteromonas</taxon>
    </lineage>
</organism>